<accession>P69278</accession>
<accession>Q02599</accession>
<keyword id="KW-0025">Alternative splicing</keyword>
<keyword id="KW-1262">Eukaryotic host gene expression shutoff by virus</keyword>
<keyword id="KW-1035">Host cytoplasm</keyword>
<keyword id="KW-1190">Host gene expression shutoff by virus</keyword>
<keyword id="KW-1192">Host mRNA suppression by virus</keyword>
<keyword id="KW-1048">Host nucleus</keyword>
<keyword id="KW-0945">Host-virus interaction</keyword>
<keyword id="KW-1090">Inhibition of host innate immune response by virus</keyword>
<keyword id="KW-1114">Inhibition of host interferon signaling pathway by virus</keyword>
<keyword id="KW-1102">Inhibition of host PKR by virus</keyword>
<keyword id="KW-1103">Inhibition of host pre-mRNA processing by virus</keyword>
<keyword id="KW-1088">Inhibition of host RIG-I by virus</keyword>
<keyword id="KW-1113">Inhibition of host RLR pathway by virus</keyword>
<keyword id="KW-0922">Interferon antiviral system evasion</keyword>
<keyword id="KW-0694">RNA-binding</keyword>
<keyword id="KW-0832">Ubl conjugation</keyword>
<keyword id="KW-0899">Viral immunoevasion</keyword>
<sequence>MDSNTVSSFQVDCFLWHVRKQVVDQELGDAPFLDRLRRDQKSLRGRGSTLGLNIEAATRVGKQIVERILKEESDEALKMTMASAPASRYLTDMTIEELSRDWFMLMPKQKVEGPLCIRIDQAIMDKNVMLKANFSVIFDRLETLILLRAFTEEGAIVGEISPLPSLPGHTIEDVKNAIGVLIGGLEWNDNTVRVSKTLQRFAWGSSNENGRPPLTPKQKRKMARTVRSKVRRDKMAD</sequence>
<name>NS1_I000W</name>
<comment type="function">
    <text evidence="1">Inhibits post-transcriptional processing of cellular pre-mRNA, by binding and inhibiting two cellular proteins that are required for the 3'-end processing of cellular pre-mRNAs: the 30 kDa cleavage and polyadenylation specificity factor/CPSF4 and the poly(A)-binding protein 2/PABPN1. In turn, unprocessed 3' end pre-mRNAs accumulate in the host nucleus and are no longer exported to the cytoplasm. Cellular protein synthesis is thereby shut off very early after virus infection. Viral protein synthesis is not affected by the inhibition of the cellular 3' end processing machinery because the poly(A) tails of viral mRNAs are produced by the viral polymerase through a stuttering mechanism. Prevents the establishment of the cellular antiviral state by inhibiting TRIM25-mediated RIGI ubiquitination, which normally triggers the antiviral transduction signal that leads to the activation of type I IFN genes by transcription factors IRF3 and IRF7. Also binds poly(A) and U6 snRNA. Inhibits the integrated stress response (ISR) in the infected cell by blocking dsRNA binding by EIF2AK2/PKR and further phosphorylation of EIF2S1/EIF-2ALPHA. Stress granule formation is thus inhibited, which allows protein synthesis and viral replication.</text>
</comment>
<comment type="subunit">
    <text evidence="1">Homodimer. Interacts with host TRIM25 (via coiled coil); this interaction specifically inhibits TRIM25 multimerization and TRIM25-mediated RIGI CARD ubiquitination. Interacts with human EIF2AK2/PKR, CPSF4, IVNS1ABP and PABPN1.</text>
</comment>
<comment type="subcellular location">
    <subcellularLocation>
        <location evidence="1">Host nucleus</location>
    </subcellularLocation>
    <subcellularLocation>
        <location evidence="1">Host cytoplasm</location>
    </subcellularLocation>
    <text evidence="1">In uninfected, transfected cells, NS1 is localized in the nucleus. Only in virus infected cells, the nuclear export signal is unveiled, presumably by a viral protein, and a fraction of NS1 is exported in the cytoplasm.</text>
</comment>
<comment type="alternative products">
    <event type="alternative splicing"/>
    <isoform>
        <id>P69278-1</id>
        <name>NS1</name>
        <sequence type="displayed"/>
    </isoform>
    <isoform>
        <id>Q04266-1</id>
        <name>NEP</name>
        <name>NS2</name>
        <sequence type="external"/>
    </isoform>
</comment>
<comment type="domain">
    <text evidence="1">The dsRNA-binding region is required for suppression of RNA silencing.</text>
</comment>
<comment type="PTM">
    <text evidence="1">Upon interferon induction, ISGylated via host HERC5; this results in the impairment of NS1 interaction with RNA targets due to its inability to form homodimers and to interact with host EIF2AK2/PKR.</text>
</comment>
<comment type="similarity">
    <text evidence="1">Belongs to the influenza A viruses NS1 family.</text>
</comment>
<feature type="chain" id="PRO_0000078954" description="Non-structural protein 1">
    <location>
        <begin position="1"/>
        <end position="237"/>
    </location>
</feature>
<feature type="region of interest" description="RNA-binding and homodimerization" evidence="1">
    <location>
        <begin position="1"/>
        <end position="73"/>
    </location>
</feature>
<feature type="region of interest" description="CPSF4-binding" evidence="1">
    <location>
        <begin position="180"/>
        <end position="215"/>
    </location>
</feature>
<feature type="region of interest" description="Disordered" evidence="2">
    <location>
        <begin position="205"/>
        <end position="237"/>
    </location>
</feature>
<feature type="region of interest" description="PABPN1-binding" evidence="1">
    <location>
        <begin position="223"/>
        <end position="230"/>
    </location>
</feature>
<feature type="short sequence motif" description="Nuclear localization signal" evidence="1">
    <location>
        <begin position="34"/>
        <end position="38"/>
    </location>
</feature>
<feature type="short sequence motif" description="Nuclear export signal" evidence="1">
    <location>
        <begin position="137"/>
        <end position="146"/>
    </location>
</feature>
<feature type="compositionally biased region" description="Basic residues" evidence="2">
    <location>
        <begin position="217"/>
        <end position="237"/>
    </location>
</feature>
<proteinExistence type="inferred from homology"/>
<dbReference type="EMBL" id="M35094">
    <property type="protein sequence ID" value="AAA43688.1"/>
    <property type="molecule type" value="Genomic_RNA"/>
</dbReference>
<dbReference type="BMRB" id="P69278"/>
<dbReference type="SMR" id="P69278"/>
<dbReference type="GO" id="GO:0030430">
    <property type="term" value="C:host cell cytoplasm"/>
    <property type="evidence" value="ECO:0007669"/>
    <property type="project" value="UniProtKB-SubCell"/>
</dbReference>
<dbReference type="GO" id="GO:0042025">
    <property type="term" value="C:host cell nucleus"/>
    <property type="evidence" value="ECO:0007669"/>
    <property type="project" value="UniProtKB-SubCell"/>
</dbReference>
<dbReference type="GO" id="GO:0030291">
    <property type="term" value="F:protein serine/threonine kinase inhibitor activity"/>
    <property type="evidence" value="ECO:0007669"/>
    <property type="project" value="UniProtKB-KW"/>
</dbReference>
<dbReference type="GO" id="GO:0003723">
    <property type="term" value="F:RNA binding"/>
    <property type="evidence" value="ECO:0007669"/>
    <property type="project" value="UniProtKB-KW"/>
</dbReference>
<dbReference type="GO" id="GO:0039540">
    <property type="term" value="P:symbiont-mediated suppression of host cytoplasmic pattern recognition receptor signaling pathway via inhibition of RIG-I activity"/>
    <property type="evidence" value="ECO:0007669"/>
    <property type="project" value="UniProtKB-KW"/>
</dbReference>
<dbReference type="GO" id="GO:0039657">
    <property type="term" value="P:symbiont-mediated suppression of host gene expression"/>
    <property type="evidence" value="ECO:0007669"/>
    <property type="project" value="UniProtKB-KW"/>
</dbReference>
<dbReference type="GO" id="GO:0039524">
    <property type="term" value="P:symbiont-mediated suppression of host mRNA processing"/>
    <property type="evidence" value="ECO:0007669"/>
    <property type="project" value="UniProtKB-KW"/>
</dbReference>
<dbReference type="GO" id="GO:0039580">
    <property type="term" value="P:symbiont-mediated suppression of host PKR/eIFalpha signaling"/>
    <property type="evidence" value="ECO:0007669"/>
    <property type="project" value="UniProtKB-KW"/>
</dbReference>
<dbReference type="GO" id="GO:0039502">
    <property type="term" value="P:symbiont-mediated suppression of host type I interferon-mediated signaling pathway"/>
    <property type="evidence" value="ECO:0007669"/>
    <property type="project" value="UniProtKB-KW"/>
</dbReference>
<dbReference type="FunFam" id="1.10.287.10:FF:000001">
    <property type="entry name" value="Non-structural protein 1"/>
    <property type="match status" value="1"/>
</dbReference>
<dbReference type="FunFam" id="3.30.420.330:FF:000001">
    <property type="entry name" value="Non-structural protein 1"/>
    <property type="match status" value="1"/>
</dbReference>
<dbReference type="Gene3D" id="3.30.420.330">
    <property type="entry name" value="Influenza virus non-structural protein, effector domain"/>
    <property type="match status" value="1"/>
</dbReference>
<dbReference type="Gene3D" id="1.10.287.10">
    <property type="entry name" value="S15/NS1, RNA-binding"/>
    <property type="match status" value="1"/>
</dbReference>
<dbReference type="HAMAP" id="MF_04066">
    <property type="entry name" value="INFV_NS1"/>
    <property type="match status" value="1"/>
</dbReference>
<dbReference type="InterPro" id="IPR004208">
    <property type="entry name" value="NS1"/>
</dbReference>
<dbReference type="InterPro" id="IPR000256">
    <property type="entry name" value="NS1A"/>
</dbReference>
<dbReference type="InterPro" id="IPR038064">
    <property type="entry name" value="NS1A_effect_dom-like_sf"/>
</dbReference>
<dbReference type="InterPro" id="IPR009068">
    <property type="entry name" value="uS15_NS1_RNA-bd_sf"/>
</dbReference>
<dbReference type="Pfam" id="PF00600">
    <property type="entry name" value="Flu_NS1"/>
    <property type="match status" value="1"/>
</dbReference>
<dbReference type="SUPFAM" id="SSF143021">
    <property type="entry name" value="Ns1 effector domain-like"/>
    <property type="match status" value="1"/>
</dbReference>
<dbReference type="SUPFAM" id="SSF47060">
    <property type="entry name" value="S15/NS1 RNA-binding domain"/>
    <property type="match status" value="1"/>
</dbReference>
<organismHost>
    <name type="scientific">Aves</name>
    <dbReference type="NCBI Taxonomy" id="8782"/>
</organismHost>
<evidence type="ECO:0000255" key="1">
    <source>
        <dbReference type="HAMAP-Rule" id="MF_04066"/>
    </source>
</evidence>
<evidence type="ECO:0000256" key="2">
    <source>
        <dbReference type="SAM" id="MobiDB-lite"/>
    </source>
</evidence>
<gene>
    <name evidence="1" type="primary">NS</name>
</gene>
<reference key="1">
    <citation type="journal article" date="1990" name="Proc. Natl. Acad. Sci. U.S.A.">
        <title>Mutation in NS2, a nonstructural protein of influenza A virus, extragenically causes aberrant replication and expression of the PA gene and leads to generation of defective interfering particles.</title>
        <authorList>
            <person name="Odagiri T."/>
            <person name="Tobita K."/>
        </authorList>
    </citation>
    <scope>NUCLEOTIDE SEQUENCE [GENOMIC RNA]</scope>
</reference>
<reference key="2">
    <citation type="journal article" date="2003" name="Virology">
        <title>Intracellular warfare between human influenza viruses and human cells: the roles of the viral NS1 protein.</title>
        <authorList>
            <person name="Krug R.M."/>
            <person name="Yuan W."/>
            <person name="Noah D.L."/>
            <person name="Latham A.G."/>
        </authorList>
    </citation>
    <scope>REVIEW</scope>
</reference>
<protein>
    <recommendedName>
        <fullName evidence="1">Non-structural protein 1</fullName>
        <shortName evidence="1">NS1</shortName>
    </recommendedName>
    <alternativeName>
        <fullName evidence="1">NS1A</fullName>
    </alternativeName>
</protein>
<organism>
    <name type="scientific">Influenza A virus (strain A/Wa-182)</name>
    <dbReference type="NCBI Taxonomy" id="38985"/>
    <lineage>
        <taxon>Viruses</taxon>
        <taxon>Riboviria</taxon>
        <taxon>Orthornavirae</taxon>
        <taxon>Negarnaviricota</taxon>
        <taxon>Polyploviricotina</taxon>
        <taxon>Insthoviricetes</taxon>
        <taxon>Articulavirales</taxon>
        <taxon>Orthomyxoviridae</taxon>
        <taxon>Alphainfluenzavirus</taxon>
        <taxon>Alphainfluenzavirus influenzae</taxon>
        <taxon>Influenza A virus</taxon>
    </lineage>
</organism>